<gene>
    <name evidence="1" type="primary">lplA</name>
    <name type="ordered locus">EcE24377A_4985</name>
</gene>
<organism>
    <name type="scientific">Escherichia coli O139:H28 (strain E24377A / ETEC)</name>
    <dbReference type="NCBI Taxonomy" id="331111"/>
    <lineage>
        <taxon>Bacteria</taxon>
        <taxon>Pseudomonadati</taxon>
        <taxon>Pseudomonadota</taxon>
        <taxon>Gammaproteobacteria</taxon>
        <taxon>Enterobacterales</taxon>
        <taxon>Enterobacteriaceae</taxon>
        <taxon>Escherichia</taxon>
    </lineage>
</organism>
<comment type="function">
    <text evidence="1">Catalyzes both the ATP-dependent activation of exogenously supplied lipoate to lipoyl-AMP and the transfer of the activated lipoyl onto the lipoyl domains of lipoate-dependent enzymes.</text>
</comment>
<comment type="catalytic activity">
    <reaction evidence="1">
        <text>L-lysyl-[lipoyl-carrier protein] + (R)-lipoate + ATP = N(6)-[(R)-lipoyl]-L-lysyl-[lipoyl-carrier protein] + AMP + diphosphate + H(+)</text>
        <dbReference type="Rhea" id="RHEA:49288"/>
        <dbReference type="Rhea" id="RHEA-COMP:10500"/>
        <dbReference type="Rhea" id="RHEA-COMP:10502"/>
        <dbReference type="ChEBI" id="CHEBI:15378"/>
        <dbReference type="ChEBI" id="CHEBI:29969"/>
        <dbReference type="ChEBI" id="CHEBI:30616"/>
        <dbReference type="ChEBI" id="CHEBI:33019"/>
        <dbReference type="ChEBI" id="CHEBI:83088"/>
        <dbReference type="ChEBI" id="CHEBI:83099"/>
        <dbReference type="ChEBI" id="CHEBI:456215"/>
        <dbReference type="EC" id="6.3.1.20"/>
    </reaction>
</comment>
<comment type="pathway">
    <text evidence="1">Protein modification; protein lipoylation via exogenous pathway; protein N(6)-(lipoyl)lysine from lipoate: step 1/2.</text>
</comment>
<comment type="pathway">
    <text evidence="1">Protein modification; protein lipoylation via exogenous pathway; protein N(6)-(lipoyl)lysine from lipoate: step 2/2.</text>
</comment>
<comment type="subunit">
    <text evidence="1">Monomer.</text>
</comment>
<comment type="subcellular location">
    <subcellularLocation>
        <location evidence="1">Cytoplasm</location>
    </subcellularLocation>
</comment>
<comment type="miscellaneous">
    <text evidence="1">In the transfer reaction, the free carboxyl group of lipoic acid is attached via an amide linkage to the epsilon-amino group of a specific lysine residue of lipoyl domains of lipoate-dependent enzymes.</text>
</comment>
<comment type="similarity">
    <text evidence="1">Belongs to the LplA family.</text>
</comment>
<proteinExistence type="inferred from homology"/>
<dbReference type="EC" id="6.3.1.20" evidence="1"/>
<dbReference type="EMBL" id="CP000800">
    <property type="protein sequence ID" value="ABV18841.1"/>
    <property type="molecule type" value="Genomic_DNA"/>
</dbReference>
<dbReference type="RefSeq" id="WP_000105865.1">
    <property type="nucleotide sequence ID" value="NC_009801.1"/>
</dbReference>
<dbReference type="SMR" id="A7ZVS8"/>
<dbReference type="KEGG" id="ecw:EcE24377A_4985"/>
<dbReference type="HOGENOM" id="CLU_022986_0_1_6"/>
<dbReference type="UniPathway" id="UPA00537">
    <property type="reaction ID" value="UER00594"/>
</dbReference>
<dbReference type="UniPathway" id="UPA00537">
    <property type="reaction ID" value="UER00595"/>
</dbReference>
<dbReference type="Proteomes" id="UP000001122">
    <property type="component" value="Chromosome"/>
</dbReference>
<dbReference type="GO" id="GO:0005829">
    <property type="term" value="C:cytosol"/>
    <property type="evidence" value="ECO:0007669"/>
    <property type="project" value="TreeGrafter"/>
</dbReference>
<dbReference type="GO" id="GO:0005524">
    <property type="term" value="F:ATP binding"/>
    <property type="evidence" value="ECO:0007669"/>
    <property type="project" value="UniProtKB-KW"/>
</dbReference>
<dbReference type="GO" id="GO:0016979">
    <property type="term" value="F:lipoate-protein ligase activity"/>
    <property type="evidence" value="ECO:0007669"/>
    <property type="project" value="UniProtKB-UniRule"/>
</dbReference>
<dbReference type="GO" id="GO:0017118">
    <property type="term" value="F:lipoyltransferase activity"/>
    <property type="evidence" value="ECO:0007669"/>
    <property type="project" value="TreeGrafter"/>
</dbReference>
<dbReference type="GO" id="GO:0036211">
    <property type="term" value="P:protein modification process"/>
    <property type="evidence" value="ECO:0007669"/>
    <property type="project" value="InterPro"/>
</dbReference>
<dbReference type="CDD" id="cd16435">
    <property type="entry name" value="BPL_LplA_LipB"/>
    <property type="match status" value="1"/>
</dbReference>
<dbReference type="FunFam" id="3.30.390.50:FF:000002">
    <property type="entry name" value="Lipoate-protein ligase A"/>
    <property type="match status" value="1"/>
</dbReference>
<dbReference type="FunFam" id="3.30.930.10:FF:000024">
    <property type="entry name" value="Lipoate-protein ligase A"/>
    <property type="match status" value="1"/>
</dbReference>
<dbReference type="Gene3D" id="3.30.930.10">
    <property type="entry name" value="Bira Bifunctional Protein, Domain 2"/>
    <property type="match status" value="1"/>
</dbReference>
<dbReference type="Gene3D" id="3.30.390.50">
    <property type="entry name" value="CO dehydrogenase flavoprotein, C-terminal domain"/>
    <property type="match status" value="1"/>
</dbReference>
<dbReference type="HAMAP" id="MF_01602">
    <property type="entry name" value="LplA"/>
    <property type="match status" value="1"/>
</dbReference>
<dbReference type="InterPro" id="IPR045864">
    <property type="entry name" value="aa-tRNA-synth_II/BPL/LPL"/>
</dbReference>
<dbReference type="InterPro" id="IPR004143">
    <property type="entry name" value="BPL_LPL_catalytic"/>
</dbReference>
<dbReference type="InterPro" id="IPR023741">
    <property type="entry name" value="Lipoate_ligase_A"/>
</dbReference>
<dbReference type="InterPro" id="IPR019491">
    <property type="entry name" value="Lipoate_protein_ligase_C"/>
</dbReference>
<dbReference type="InterPro" id="IPR004562">
    <property type="entry name" value="LipoylTrfase_LipoateP_Ligase"/>
</dbReference>
<dbReference type="NCBIfam" id="TIGR00545">
    <property type="entry name" value="lipoyltrans"/>
    <property type="match status" value="1"/>
</dbReference>
<dbReference type="PANTHER" id="PTHR12561">
    <property type="entry name" value="LIPOATE-PROTEIN LIGASE"/>
    <property type="match status" value="1"/>
</dbReference>
<dbReference type="PANTHER" id="PTHR12561:SF3">
    <property type="entry name" value="LIPOYLTRANSFERASE 1, MITOCHONDRIAL"/>
    <property type="match status" value="1"/>
</dbReference>
<dbReference type="Pfam" id="PF10437">
    <property type="entry name" value="Lip_prot_lig_C"/>
    <property type="match status" value="1"/>
</dbReference>
<dbReference type="Pfam" id="PF21948">
    <property type="entry name" value="LplA-B_cat"/>
    <property type="match status" value="1"/>
</dbReference>
<dbReference type="SUPFAM" id="SSF55681">
    <property type="entry name" value="Class II aaRS and biotin synthetases"/>
    <property type="match status" value="1"/>
</dbReference>
<dbReference type="SUPFAM" id="SSF82649">
    <property type="entry name" value="SufE/NifU"/>
    <property type="match status" value="1"/>
</dbReference>
<dbReference type="PROSITE" id="PS51733">
    <property type="entry name" value="BPL_LPL_CATALYTIC"/>
    <property type="match status" value="1"/>
</dbReference>
<reference key="1">
    <citation type="journal article" date="2008" name="J. Bacteriol.">
        <title>The pangenome structure of Escherichia coli: comparative genomic analysis of E. coli commensal and pathogenic isolates.</title>
        <authorList>
            <person name="Rasko D.A."/>
            <person name="Rosovitz M.J."/>
            <person name="Myers G.S.A."/>
            <person name="Mongodin E.F."/>
            <person name="Fricke W.F."/>
            <person name="Gajer P."/>
            <person name="Crabtree J."/>
            <person name="Sebaihia M."/>
            <person name="Thomson N.R."/>
            <person name="Chaudhuri R."/>
            <person name="Henderson I.R."/>
            <person name="Sperandio V."/>
            <person name="Ravel J."/>
        </authorList>
    </citation>
    <scope>NUCLEOTIDE SEQUENCE [LARGE SCALE GENOMIC DNA]</scope>
    <source>
        <strain>E24377A / ETEC</strain>
    </source>
</reference>
<evidence type="ECO:0000255" key="1">
    <source>
        <dbReference type="HAMAP-Rule" id="MF_01602"/>
    </source>
</evidence>
<evidence type="ECO:0000255" key="2">
    <source>
        <dbReference type="PROSITE-ProRule" id="PRU01067"/>
    </source>
</evidence>
<keyword id="KW-0067">ATP-binding</keyword>
<keyword id="KW-0963">Cytoplasm</keyword>
<keyword id="KW-0436">Ligase</keyword>
<keyword id="KW-0547">Nucleotide-binding</keyword>
<keyword id="KW-1185">Reference proteome</keyword>
<accession>A7ZVS8</accession>
<name>LPLA_ECO24</name>
<protein>
    <recommendedName>
        <fullName evidence="1">Lipoate-protein ligase A</fullName>
        <ecNumber evidence="1">6.3.1.20</ecNumber>
    </recommendedName>
    <alternativeName>
        <fullName evidence="1">Lipoate--protein ligase</fullName>
    </alternativeName>
</protein>
<sequence length="338" mass="37836">MSTLRLLISDSYDPWFNLAVEECIFRQMPATQRVLFLWRNADTVVIGRAQNPWKECNTRRMEEDNVRLARRSSGGGAVFHDLGNTCFTFMAGKPEYDKTISTSIVLNALNALGVSAEASGRNDLVVKTAEGDRKVSGSAYRETKDRGFHHGTLLLNADLSRLANYLNPDKKKLAAKGITSVRSRVTNLTELLPGITHEQVCEAITKAFFAHYGERVEAEIISPDKTPDLPNFAETFARQSSWEWNFGQAPAFSHLLDERFSWGGVELHFDVEKGHITRAQVFTDSLNPAPLEALAGRLQGGLYRADMLQQECEALLVDFPDQEKELRELSTWIAGAVR</sequence>
<feature type="chain" id="PRO_1000069377" description="Lipoate-protein ligase A">
    <location>
        <begin position="1"/>
        <end position="338"/>
    </location>
</feature>
<feature type="domain" description="BPL/LPL catalytic" evidence="2">
    <location>
        <begin position="29"/>
        <end position="216"/>
    </location>
</feature>
<feature type="binding site" evidence="1">
    <location>
        <position position="71"/>
    </location>
    <ligand>
        <name>ATP</name>
        <dbReference type="ChEBI" id="CHEBI:30616"/>
    </ligand>
</feature>
<feature type="binding site" evidence="1">
    <location>
        <begin position="76"/>
        <end position="79"/>
    </location>
    <ligand>
        <name>ATP</name>
        <dbReference type="ChEBI" id="CHEBI:30616"/>
    </ligand>
</feature>
<feature type="binding site" evidence="1">
    <location>
        <position position="134"/>
    </location>
    <ligand>
        <name>(R)-lipoate</name>
        <dbReference type="ChEBI" id="CHEBI:83088"/>
    </ligand>
</feature>
<feature type="binding site" evidence="1">
    <location>
        <position position="134"/>
    </location>
    <ligand>
        <name>ATP</name>
        <dbReference type="ChEBI" id="CHEBI:30616"/>
    </ligand>
</feature>